<feature type="chain" id="PRO_0000076571" description="Transcription factor RF2b">
    <location>
        <begin position="1"/>
        <end position="329"/>
    </location>
</feature>
<feature type="domain" description="bZIP" evidence="1">
    <location>
        <begin position="132"/>
        <end position="195"/>
    </location>
</feature>
<feature type="region of interest" description="Disordered" evidence="2">
    <location>
        <begin position="1"/>
        <end position="24"/>
    </location>
</feature>
<feature type="region of interest" description="Disordered" evidence="2">
    <location>
        <begin position="62"/>
        <end position="97"/>
    </location>
</feature>
<feature type="region of interest" description="Basic motif" evidence="1">
    <location>
        <begin position="134"/>
        <end position="155"/>
    </location>
</feature>
<feature type="region of interest" description="Leucine-zipper" evidence="1">
    <location>
        <begin position="160"/>
        <end position="174"/>
    </location>
</feature>
<feature type="region of interest" description="Disordered" evidence="2">
    <location>
        <begin position="260"/>
        <end position="303"/>
    </location>
</feature>
<feature type="sequence conflict" description="In Ref. 1; AAR28765." ref="1">
    <original>E</original>
    <variation>D</variation>
    <location>
        <position position="127"/>
    </location>
</feature>
<sequence>MQEPKHTDPAAMRGAHHRRARSEVAFRLPDDLDLGGGGAGAFDEIGSEDDLFSTFMDIEKISSGPAAAGGSDRDRAAETSSPPRPKHRHSSSVDGSGFFAAARKDAAASLAEVMEAKKAMTPEQLSELAAIDPKRAKRILANRQSAARSKERKARYITELERKVQTLQTEATTLSAQLTLFQRDTTGLSAENAELKIRLQAMEQQAQLRDALNDALKQELERLKLATGEMTNSNETYSMGLQHVPYNTPFFPLAQHNAARQNGGTQLPPQFQPPRPNVPNHMLSHPNGLQDIMQQDPLGRLQGLDISKGPLVVKSESSSISASESSSTF</sequence>
<protein>
    <recommendedName>
        <fullName>Transcription factor RF2b</fullName>
    </recommendedName>
</protein>
<name>RF2B_ORYSJ</name>
<accession>Q6S4P4</accession>
<accession>A0A0P0VX99</accession>
<accession>Q10LT0</accession>
<keyword id="KW-0010">Activator</keyword>
<keyword id="KW-0238">DNA-binding</keyword>
<keyword id="KW-0539">Nucleus</keyword>
<keyword id="KW-1185">Reference proteome</keyword>
<keyword id="KW-0804">Transcription</keyword>
<keyword id="KW-0805">Transcription regulation</keyword>
<gene>
    <name type="primary">RF2b</name>
    <name type="ordered locus">Os03g0336200</name>
    <name type="ordered locus">LOC_Os03g21800</name>
</gene>
<dbReference type="EMBL" id="AY466471">
    <property type="protein sequence ID" value="AAR28765.1"/>
    <property type="molecule type" value="mRNA"/>
</dbReference>
<dbReference type="EMBL" id="AC125496">
    <property type="status" value="NOT_ANNOTATED_CDS"/>
    <property type="molecule type" value="Genomic_DNA"/>
</dbReference>
<dbReference type="EMBL" id="DP000009">
    <property type="protein sequence ID" value="ABF95818.1"/>
    <property type="molecule type" value="Genomic_DNA"/>
</dbReference>
<dbReference type="EMBL" id="AP008209">
    <property type="protein sequence ID" value="BAF11953.1"/>
    <property type="molecule type" value="Genomic_DNA"/>
</dbReference>
<dbReference type="EMBL" id="AP014959">
    <property type="protein sequence ID" value="BAS84083.1"/>
    <property type="molecule type" value="Genomic_DNA"/>
</dbReference>
<dbReference type="EMBL" id="AK059473">
    <property type="protein sequence ID" value="BAG87003.1"/>
    <property type="molecule type" value="mRNA"/>
</dbReference>
<dbReference type="EMBL" id="AK070466">
    <property type="protein sequence ID" value="BAG91971.1"/>
    <property type="molecule type" value="mRNA"/>
</dbReference>
<dbReference type="RefSeq" id="XP_015632816.1">
    <property type="nucleotide sequence ID" value="XM_015777330.1"/>
</dbReference>
<dbReference type="SMR" id="Q6S4P4"/>
<dbReference type="FunCoup" id="Q6S4P4">
    <property type="interactions" value="235"/>
</dbReference>
<dbReference type="STRING" id="39947.Q6S4P4"/>
<dbReference type="PaxDb" id="39947-Q6S4P4"/>
<dbReference type="EnsemblPlants" id="Os03t0336200-01">
    <property type="protein sequence ID" value="Os03t0336200-01"/>
    <property type="gene ID" value="Os03g0336200"/>
</dbReference>
<dbReference type="EnsemblPlants" id="Os03t0336200-02">
    <property type="protein sequence ID" value="Os03t0336200-02"/>
    <property type="gene ID" value="Os03g0336200"/>
</dbReference>
<dbReference type="Gramene" id="Os03t0336200-01">
    <property type="protein sequence ID" value="Os03t0336200-01"/>
    <property type="gene ID" value="Os03g0336200"/>
</dbReference>
<dbReference type="Gramene" id="Os03t0336200-02">
    <property type="protein sequence ID" value="Os03t0336200-02"/>
    <property type="gene ID" value="Os03g0336200"/>
</dbReference>
<dbReference type="KEGG" id="dosa:Os03g0336200"/>
<dbReference type="eggNOG" id="ENOG502QQKB">
    <property type="taxonomic scope" value="Eukaryota"/>
</dbReference>
<dbReference type="HOGENOM" id="CLU_026205_1_0_1"/>
<dbReference type="InParanoid" id="Q6S4P4"/>
<dbReference type="OMA" id="TGEMMSH"/>
<dbReference type="OrthoDB" id="1435597at2759"/>
<dbReference type="Proteomes" id="UP000000763">
    <property type="component" value="Chromosome 3"/>
</dbReference>
<dbReference type="Proteomes" id="UP000059680">
    <property type="component" value="Chromosome 3"/>
</dbReference>
<dbReference type="GO" id="GO:0005634">
    <property type="term" value="C:nucleus"/>
    <property type="evidence" value="ECO:0000318"/>
    <property type="project" value="GO_Central"/>
</dbReference>
<dbReference type="GO" id="GO:0003677">
    <property type="term" value="F:DNA binding"/>
    <property type="evidence" value="ECO:0007669"/>
    <property type="project" value="UniProtKB-KW"/>
</dbReference>
<dbReference type="GO" id="GO:0003700">
    <property type="term" value="F:DNA-binding transcription factor activity"/>
    <property type="evidence" value="ECO:0000318"/>
    <property type="project" value="GO_Central"/>
</dbReference>
<dbReference type="CDD" id="cd14703">
    <property type="entry name" value="bZIP_plant_RF2"/>
    <property type="match status" value="1"/>
</dbReference>
<dbReference type="FunFam" id="1.20.5.170:FF:000009">
    <property type="entry name" value="probable transcription factor PosF21"/>
    <property type="match status" value="1"/>
</dbReference>
<dbReference type="Gene3D" id="1.20.5.170">
    <property type="match status" value="1"/>
</dbReference>
<dbReference type="InterPro" id="IPR004827">
    <property type="entry name" value="bZIP"/>
</dbReference>
<dbReference type="InterPro" id="IPR044759">
    <property type="entry name" value="bZIP_RF2"/>
</dbReference>
<dbReference type="InterPro" id="IPR046347">
    <property type="entry name" value="bZIP_sf"/>
</dbReference>
<dbReference type="PANTHER" id="PTHR13690:SF103">
    <property type="entry name" value="BZIP TRANSCRIPTION FACTOR 18"/>
    <property type="match status" value="1"/>
</dbReference>
<dbReference type="PANTHER" id="PTHR13690">
    <property type="entry name" value="TRANSCRIPTION FACTOR POSF21-RELATED"/>
    <property type="match status" value="1"/>
</dbReference>
<dbReference type="Pfam" id="PF00170">
    <property type="entry name" value="bZIP_1"/>
    <property type="match status" value="1"/>
</dbReference>
<dbReference type="SMART" id="SM00338">
    <property type="entry name" value="BRLZ"/>
    <property type="match status" value="1"/>
</dbReference>
<dbReference type="SUPFAM" id="SSF57959">
    <property type="entry name" value="Leucine zipper domain"/>
    <property type="match status" value="1"/>
</dbReference>
<dbReference type="PROSITE" id="PS50217">
    <property type="entry name" value="BZIP"/>
    <property type="match status" value="1"/>
</dbReference>
<reference key="1">
    <citation type="journal article" date="2004" name="Proc. Natl. Acad. Sci. U.S.A.">
        <title>RF2b, a rice bZIP transcription activator, interacts with RF2a and is involved in symptom development of rice tungro disease.</title>
        <authorList>
            <person name="Dai S."/>
            <person name="Zhang Z."/>
            <person name="Chen S."/>
            <person name="Beachy R.N."/>
        </authorList>
    </citation>
    <scope>NUCLEOTIDE SEQUENCE [MRNA]</scope>
    <scope>FUNCTION</scope>
    <scope>SUBUNIT</scope>
    <scope>SUBCELLULAR LOCATION</scope>
    <scope>TISSUE SPECIFICITY</scope>
    <scope>INTERACTION WITH RF2A</scope>
    <source>
        <strain>cv. Nipponbare</strain>
    </source>
</reference>
<reference key="2">
    <citation type="journal article" date="2005" name="Genome Res.">
        <title>Sequence, annotation, and analysis of synteny between rice chromosome 3 and diverged grass species.</title>
        <authorList>
            <consortium name="The rice chromosome 3 sequencing consortium"/>
            <person name="Buell C.R."/>
            <person name="Yuan Q."/>
            <person name="Ouyang S."/>
            <person name="Liu J."/>
            <person name="Zhu W."/>
            <person name="Wang A."/>
            <person name="Maiti R."/>
            <person name="Haas B."/>
            <person name="Wortman J."/>
            <person name="Pertea M."/>
            <person name="Jones K.M."/>
            <person name="Kim M."/>
            <person name="Overton L."/>
            <person name="Tsitrin T."/>
            <person name="Fadrosh D."/>
            <person name="Bera J."/>
            <person name="Weaver B."/>
            <person name="Jin S."/>
            <person name="Johri S."/>
            <person name="Reardon M."/>
            <person name="Webb K."/>
            <person name="Hill J."/>
            <person name="Moffat K."/>
            <person name="Tallon L."/>
            <person name="Van Aken S."/>
            <person name="Lewis M."/>
            <person name="Utterback T."/>
            <person name="Feldblyum T."/>
            <person name="Zismann V."/>
            <person name="Iobst S."/>
            <person name="Hsiao J."/>
            <person name="de Vazeille A.R."/>
            <person name="Salzberg S.L."/>
            <person name="White O."/>
            <person name="Fraser C.M."/>
            <person name="Yu Y."/>
            <person name="Kim H."/>
            <person name="Rambo T."/>
            <person name="Currie J."/>
            <person name="Collura K."/>
            <person name="Kernodle-Thompson S."/>
            <person name="Wei F."/>
            <person name="Kudrna K."/>
            <person name="Ammiraju J.S.S."/>
            <person name="Luo M."/>
            <person name="Goicoechea J.L."/>
            <person name="Wing R.A."/>
            <person name="Henry D."/>
            <person name="Oates R."/>
            <person name="Palmer M."/>
            <person name="Pries G."/>
            <person name="Saski C."/>
            <person name="Simmons J."/>
            <person name="Soderlund C."/>
            <person name="Nelson W."/>
            <person name="de la Bastide M."/>
            <person name="Spiegel L."/>
            <person name="Nascimento L."/>
            <person name="Huang E."/>
            <person name="Preston R."/>
            <person name="Zutavern T."/>
            <person name="Palmer L."/>
            <person name="O'Shaughnessy A."/>
            <person name="Dike S."/>
            <person name="McCombie W.R."/>
            <person name="Minx P."/>
            <person name="Cordum H."/>
            <person name="Wilson R."/>
            <person name="Jin W."/>
            <person name="Lee H.R."/>
            <person name="Jiang J."/>
            <person name="Jackson S."/>
        </authorList>
    </citation>
    <scope>NUCLEOTIDE SEQUENCE [LARGE SCALE GENOMIC DNA]</scope>
    <source>
        <strain>cv. Nipponbare</strain>
    </source>
</reference>
<reference key="3">
    <citation type="journal article" date="2005" name="Nature">
        <title>The map-based sequence of the rice genome.</title>
        <authorList>
            <consortium name="International rice genome sequencing project (IRGSP)"/>
        </authorList>
    </citation>
    <scope>NUCLEOTIDE SEQUENCE [LARGE SCALE GENOMIC DNA]</scope>
    <source>
        <strain>cv. Nipponbare</strain>
    </source>
</reference>
<reference key="4">
    <citation type="journal article" date="2008" name="Nucleic Acids Res.">
        <title>The rice annotation project database (RAP-DB): 2008 update.</title>
        <authorList>
            <consortium name="The rice annotation project (RAP)"/>
        </authorList>
    </citation>
    <scope>GENOME REANNOTATION</scope>
    <source>
        <strain>cv. Nipponbare</strain>
    </source>
</reference>
<reference key="5">
    <citation type="journal article" date="2013" name="Rice">
        <title>Improvement of the Oryza sativa Nipponbare reference genome using next generation sequence and optical map data.</title>
        <authorList>
            <person name="Kawahara Y."/>
            <person name="de la Bastide M."/>
            <person name="Hamilton J.P."/>
            <person name="Kanamori H."/>
            <person name="McCombie W.R."/>
            <person name="Ouyang S."/>
            <person name="Schwartz D.C."/>
            <person name="Tanaka T."/>
            <person name="Wu J."/>
            <person name="Zhou S."/>
            <person name="Childs K.L."/>
            <person name="Davidson R.M."/>
            <person name="Lin H."/>
            <person name="Quesada-Ocampo L."/>
            <person name="Vaillancourt B."/>
            <person name="Sakai H."/>
            <person name="Lee S.S."/>
            <person name="Kim J."/>
            <person name="Numa H."/>
            <person name="Itoh T."/>
            <person name="Buell C.R."/>
            <person name="Matsumoto T."/>
        </authorList>
    </citation>
    <scope>GENOME REANNOTATION</scope>
    <source>
        <strain>cv. Nipponbare</strain>
    </source>
</reference>
<reference key="6">
    <citation type="journal article" date="2003" name="Science">
        <title>Collection, mapping, and annotation of over 28,000 cDNA clones from japonica rice.</title>
        <authorList>
            <consortium name="The rice full-length cDNA consortium"/>
        </authorList>
    </citation>
    <scope>NUCLEOTIDE SEQUENCE [LARGE SCALE MRNA]</scope>
    <source>
        <strain>cv. Nipponbare</strain>
    </source>
</reference>
<organism>
    <name type="scientific">Oryza sativa subsp. japonica</name>
    <name type="common">Rice</name>
    <dbReference type="NCBI Taxonomy" id="39947"/>
    <lineage>
        <taxon>Eukaryota</taxon>
        <taxon>Viridiplantae</taxon>
        <taxon>Streptophyta</taxon>
        <taxon>Embryophyta</taxon>
        <taxon>Tracheophyta</taxon>
        <taxon>Spermatophyta</taxon>
        <taxon>Magnoliopsida</taxon>
        <taxon>Liliopsida</taxon>
        <taxon>Poales</taxon>
        <taxon>Poaceae</taxon>
        <taxon>BOP clade</taxon>
        <taxon>Oryzoideae</taxon>
        <taxon>Oryzeae</taxon>
        <taxon>Oryzinae</taxon>
        <taxon>Oryza</taxon>
        <taxon>Oryza sativa</taxon>
    </lineage>
</organism>
<proteinExistence type="evidence at protein level"/>
<evidence type="ECO:0000255" key="1">
    <source>
        <dbReference type="PROSITE-ProRule" id="PRU00978"/>
    </source>
</evidence>
<evidence type="ECO:0000256" key="2">
    <source>
        <dbReference type="SAM" id="MobiDB-lite"/>
    </source>
</evidence>
<evidence type="ECO:0000269" key="3">
    <source>
    </source>
</evidence>
<evidence type="ECO:0000305" key="4"/>
<comment type="function">
    <text evidence="3">Transcription factor probably involved in vascular development and shoot tissue organization. Binds to the DNA sequence 5'-CCGAGTGTGCCCCTGG-3' present in the promoter region Box II of the phloem-specific rice tungro bacilliform virus (RTBV) promoter. May regulate tissue-specific expression of the RTBV promoter and virus replication.</text>
</comment>
<comment type="subunit">
    <text evidence="3">Binds DNA as a homodimer or as a heterodimer with RF2a. The heterodimer binds stronger to DNA than the homodimer.</text>
</comment>
<comment type="subcellular location">
    <subcellularLocation>
        <location evidence="1 3">Nucleus</location>
    </subcellularLocation>
</comment>
<comment type="tissue specificity">
    <text evidence="3">Expressed at high levels in roots, low level in leaf sheath, but not in leaf blade. Predominantly expressed in vascular tissues.</text>
</comment>
<comment type="similarity">
    <text evidence="4">Belongs to the bZIP family.</text>
</comment>